<dbReference type="EMBL" id="AE016830">
    <property type="protein sequence ID" value="AAO80070.1"/>
    <property type="molecule type" value="Genomic_DNA"/>
</dbReference>
<dbReference type="RefSeq" id="NP_813999.1">
    <property type="nucleotide sequence ID" value="NC_004668.1"/>
</dbReference>
<dbReference type="RefSeq" id="WP_002356192.1">
    <property type="nucleotide sequence ID" value="NZ_KE136524.1"/>
</dbReference>
<dbReference type="PDB" id="6BK7">
    <property type="method" value="X-ray"/>
    <property type="resolution" value="1.83 A"/>
    <property type="chains" value="A/B=1-404"/>
</dbReference>
<dbReference type="PDBsum" id="6BK7"/>
<dbReference type="SMR" id="Q839G9"/>
<dbReference type="STRING" id="226185.EF_0200"/>
<dbReference type="EnsemblBacteria" id="AAO80070">
    <property type="protein sequence ID" value="AAO80070"/>
    <property type="gene ID" value="EF_0200"/>
</dbReference>
<dbReference type="GeneID" id="60892696"/>
<dbReference type="KEGG" id="efa:EF0200"/>
<dbReference type="PATRIC" id="fig|226185.45.peg.66"/>
<dbReference type="eggNOG" id="COG0480">
    <property type="taxonomic scope" value="Bacteria"/>
</dbReference>
<dbReference type="HOGENOM" id="CLU_002794_4_1_9"/>
<dbReference type="Proteomes" id="UP000001415">
    <property type="component" value="Chromosome"/>
</dbReference>
<dbReference type="GO" id="GO:0005737">
    <property type="term" value="C:cytoplasm"/>
    <property type="evidence" value="ECO:0007669"/>
    <property type="project" value="UniProtKB-SubCell"/>
</dbReference>
<dbReference type="GO" id="GO:0005525">
    <property type="term" value="F:GTP binding"/>
    <property type="evidence" value="ECO:0007669"/>
    <property type="project" value="UniProtKB-UniRule"/>
</dbReference>
<dbReference type="GO" id="GO:0003924">
    <property type="term" value="F:GTPase activity"/>
    <property type="evidence" value="ECO:0007669"/>
    <property type="project" value="InterPro"/>
</dbReference>
<dbReference type="GO" id="GO:0003746">
    <property type="term" value="F:translation elongation factor activity"/>
    <property type="evidence" value="ECO:0007669"/>
    <property type="project" value="UniProtKB-UniRule"/>
</dbReference>
<dbReference type="GO" id="GO:0032790">
    <property type="term" value="P:ribosome disassembly"/>
    <property type="evidence" value="ECO:0007669"/>
    <property type="project" value="TreeGrafter"/>
</dbReference>
<dbReference type="CDD" id="cd01886">
    <property type="entry name" value="EF-G"/>
    <property type="match status" value="1"/>
</dbReference>
<dbReference type="CDD" id="cd16262">
    <property type="entry name" value="EFG_III"/>
    <property type="match status" value="1"/>
</dbReference>
<dbReference type="CDD" id="cd01434">
    <property type="entry name" value="EFG_mtEFG1_IV"/>
    <property type="match status" value="1"/>
</dbReference>
<dbReference type="CDD" id="cd03713">
    <property type="entry name" value="EFG_mtEFG_C"/>
    <property type="match status" value="1"/>
</dbReference>
<dbReference type="CDD" id="cd04088">
    <property type="entry name" value="EFG_mtEFG_II"/>
    <property type="match status" value="1"/>
</dbReference>
<dbReference type="FunFam" id="2.40.30.10:FF:000006">
    <property type="entry name" value="Elongation factor G"/>
    <property type="match status" value="1"/>
</dbReference>
<dbReference type="FunFam" id="3.30.230.10:FF:000003">
    <property type="entry name" value="Elongation factor G"/>
    <property type="match status" value="1"/>
</dbReference>
<dbReference type="FunFam" id="3.30.70.240:FF:000001">
    <property type="entry name" value="Elongation factor G"/>
    <property type="match status" value="1"/>
</dbReference>
<dbReference type="FunFam" id="3.30.70.870:FF:000001">
    <property type="entry name" value="Elongation factor G"/>
    <property type="match status" value="1"/>
</dbReference>
<dbReference type="FunFam" id="3.40.50.300:FF:000029">
    <property type="entry name" value="Elongation factor G"/>
    <property type="match status" value="1"/>
</dbReference>
<dbReference type="Gene3D" id="3.30.230.10">
    <property type="match status" value="1"/>
</dbReference>
<dbReference type="Gene3D" id="3.30.70.240">
    <property type="match status" value="1"/>
</dbReference>
<dbReference type="Gene3D" id="3.30.70.870">
    <property type="entry name" value="Elongation Factor G (Translational Gtpase), domain 3"/>
    <property type="match status" value="1"/>
</dbReference>
<dbReference type="Gene3D" id="3.40.50.300">
    <property type="entry name" value="P-loop containing nucleotide triphosphate hydrolases"/>
    <property type="match status" value="1"/>
</dbReference>
<dbReference type="Gene3D" id="2.40.30.10">
    <property type="entry name" value="Translation factors"/>
    <property type="match status" value="1"/>
</dbReference>
<dbReference type="HAMAP" id="MF_00054_B">
    <property type="entry name" value="EF_G_EF_2_B"/>
    <property type="match status" value="1"/>
</dbReference>
<dbReference type="InterPro" id="IPR041095">
    <property type="entry name" value="EFG_II"/>
</dbReference>
<dbReference type="InterPro" id="IPR009022">
    <property type="entry name" value="EFG_III"/>
</dbReference>
<dbReference type="InterPro" id="IPR035647">
    <property type="entry name" value="EFG_III/V"/>
</dbReference>
<dbReference type="InterPro" id="IPR047872">
    <property type="entry name" value="EFG_IV"/>
</dbReference>
<dbReference type="InterPro" id="IPR035649">
    <property type="entry name" value="EFG_V"/>
</dbReference>
<dbReference type="InterPro" id="IPR000640">
    <property type="entry name" value="EFG_V-like"/>
</dbReference>
<dbReference type="InterPro" id="IPR004161">
    <property type="entry name" value="EFTu-like_2"/>
</dbReference>
<dbReference type="InterPro" id="IPR031157">
    <property type="entry name" value="G_TR_CS"/>
</dbReference>
<dbReference type="InterPro" id="IPR027417">
    <property type="entry name" value="P-loop_NTPase"/>
</dbReference>
<dbReference type="InterPro" id="IPR020568">
    <property type="entry name" value="Ribosomal_Su5_D2-typ_SF"/>
</dbReference>
<dbReference type="InterPro" id="IPR014721">
    <property type="entry name" value="Ribsml_uS5_D2-typ_fold_subgr"/>
</dbReference>
<dbReference type="InterPro" id="IPR005225">
    <property type="entry name" value="Small_GTP-bd"/>
</dbReference>
<dbReference type="InterPro" id="IPR000795">
    <property type="entry name" value="T_Tr_GTP-bd_dom"/>
</dbReference>
<dbReference type="InterPro" id="IPR009000">
    <property type="entry name" value="Transl_B-barrel_sf"/>
</dbReference>
<dbReference type="InterPro" id="IPR004540">
    <property type="entry name" value="Transl_elong_EFG/EF2"/>
</dbReference>
<dbReference type="InterPro" id="IPR005517">
    <property type="entry name" value="Transl_elong_EFG/EF2_IV"/>
</dbReference>
<dbReference type="NCBIfam" id="TIGR00484">
    <property type="entry name" value="EF-G"/>
    <property type="match status" value="1"/>
</dbReference>
<dbReference type="NCBIfam" id="NF009379">
    <property type="entry name" value="PRK12740.1-3"/>
    <property type="match status" value="1"/>
</dbReference>
<dbReference type="NCBIfam" id="NF009381">
    <property type="entry name" value="PRK12740.1-5"/>
    <property type="match status" value="1"/>
</dbReference>
<dbReference type="NCBIfam" id="TIGR00231">
    <property type="entry name" value="small_GTP"/>
    <property type="match status" value="1"/>
</dbReference>
<dbReference type="PANTHER" id="PTHR43261:SF1">
    <property type="entry name" value="RIBOSOME-RELEASING FACTOR 2, MITOCHONDRIAL"/>
    <property type="match status" value="1"/>
</dbReference>
<dbReference type="PANTHER" id="PTHR43261">
    <property type="entry name" value="TRANSLATION ELONGATION FACTOR G-RELATED"/>
    <property type="match status" value="1"/>
</dbReference>
<dbReference type="Pfam" id="PF00679">
    <property type="entry name" value="EFG_C"/>
    <property type="match status" value="1"/>
</dbReference>
<dbReference type="Pfam" id="PF14492">
    <property type="entry name" value="EFG_III"/>
    <property type="match status" value="1"/>
</dbReference>
<dbReference type="Pfam" id="PF03764">
    <property type="entry name" value="EFG_IV"/>
    <property type="match status" value="1"/>
</dbReference>
<dbReference type="Pfam" id="PF00009">
    <property type="entry name" value="GTP_EFTU"/>
    <property type="match status" value="1"/>
</dbReference>
<dbReference type="Pfam" id="PF03144">
    <property type="entry name" value="GTP_EFTU_D2"/>
    <property type="match status" value="1"/>
</dbReference>
<dbReference type="PRINTS" id="PR00315">
    <property type="entry name" value="ELONGATNFCT"/>
</dbReference>
<dbReference type="SMART" id="SM00838">
    <property type="entry name" value="EFG_C"/>
    <property type="match status" value="1"/>
</dbReference>
<dbReference type="SMART" id="SM00889">
    <property type="entry name" value="EFG_IV"/>
    <property type="match status" value="1"/>
</dbReference>
<dbReference type="SUPFAM" id="SSF54980">
    <property type="entry name" value="EF-G C-terminal domain-like"/>
    <property type="match status" value="2"/>
</dbReference>
<dbReference type="SUPFAM" id="SSF52540">
    <property type="entry name" value="P-loop containing nucleoside triphosphate hydrolases"/>
    <property type="match status" value="1"/>
</dbReference>
<dbReference type="SUPFAM" id="SSF54211">
    <property type="entry name" value="Ribosomal protein S5 domain 2-like"/>
    <property type="match status" value="1"/>
</dbReference>
<dbReference type="SUPFAM" id="SSF50447">
    <property type="entry name" value="Translation proteins"/>
    <property type="match status" value="1"/>
</dbReference>
<dbReference type="PROSITE" id="PS00301">
    <property type="entry name" value="G_TR_1"/>
    <property type="match status" value="1"/>
</dbReference>
<dbReference type="PROSITE" id="PS51722">
    <property type="entry name" value="G_TR_2"/>
    <property type="match status" value="1"/>
</dbReference>
<evidence type="ECO:0000255" key="1">
    <source>
        <dbReference type="HAMAP-Rule" id="MF_00054"/>
    </source>
</evidence>
<evidence type="ECO:0007829" key="2">
    <source>
        <dbReference type="PDB" id="6BK7"/>
    </source>
</evidence>
<organism>
    <name type="scientific">Enterococcus faecalis (strain ATCC 700802 / V583)</name>
    <dbReference type="NCBI Taxonomy" id="226185"/>
    <lineage>
        <taxon>Bacteria</taxon>
        <taxon>Bacillati</taxon>
        <taxon>Bacillota</taxon>
        <taxon>Bacilli</taxon>
        <taxon>Lactobacillales</taxon>
        <taxon>Enterococcaceae</taxon>
        <taxon>Enterococcus</taxon>
    </lineage>
</organism>
<accession>Q839G9</accession>
<feature type="chain" id="PRO_0000091122" description="Elongation factor G">
    <location>
        <begin position="1"/>
        <end position="693"/>
    </location>
</feature>
<feature type="domain" description="tr-type G">
    <location>
        <begin position="8"/>
        <end position="282"/>
    </location>
</feature>
<feature type="binding site" evidence="1">
    <location>
        <begin position="17"/>
        <end position="24"/>
    </location>
    <ligand>
        <name>GTP</name>
        <dbReference type="ChEBI" id="CHEBI:37565"/>
    </ligand>
</feature>
<feature type="binding site" evidence="1">
    <location>
        <begin position="81"/>
        <end position="85"/>
    </location>
    <ligand>
        <name>GTP</name>
        <dbReference type="ChEBI" id="CHEBI:37565"/>
    </ligand>
</feature>
<feature type="binding site" evidence="1">
    <location>
        <begin position="135"/>
        <end position="138"/>
    </location>
    <ligand>
        <name>GTP</name>
        <dbReference type="ChEBI" id="CHEBI:37565"/>
    </ligand>
</feature>
<feature type="strand" evidence="2">
    <location>
        <begin position="10"/>
        <end position="16"/>
    </location>
</feature>
<feature type="helix" evidence="2">
    <location>
        <begin position="19"/>
        <end position="21"/>
    </location>
</feature>
<feature type="helix" evidence="2">
    <location>
        <begin position="23"/>
        <end position="34"/>
    </location>
</feature>
<feature type="strand" evidence="2">
    <location>
        <begin position="66"/>
        <end position="72"/>
    </location>
</feature>
<feature type="strand" evidence="2">
    <location>
        <begin position="75"/>
        <end position="80"/>
    </location>
</feature>
<feature type="helix" evidence="2">
    <location>
        <begin position="91"/>
        <end position="98"/>
    </location>
</feature>
<feature type="strand" evidence="2">
    <location>
        <begin position="100"/>
        <end position="107"/>
    </location>
</feature>
<feature type="turn" evidence="2">
    <location>
        <begin position="108"/>
        <end position="110"/>
    </location>
</feature>
<feature type="helix" evidence="2">
    <location>
        <begin position="114"/>
        <end position="125"/>
    </location>
</feature>
<feature type="strand" evidence="2">
    <location>
        <begin position="130"/>
        <end position="135"/>
    </location>
</feature>
<feature type="helix" evidence="2">
    <location>
        <begin position="144"/>
        <end position="155"/>
    </location>
</feature>
<feature type="strand" evidence="2">
    <location>
        <begin position="159"/>
        <end position="167"/>
    </location>
</feature>
<feature type="helix" evidence="2">
    <location>
        <begin position="169"/>
        <end position="171"/>
    </location>
</feature>
<feature type="strand" evidence="2">
    <location>
        <begin position="174"/>
        <end position="177"/>
    </location>
</feature>
<feature type="turn" evidence="2">
    <location>
        <begin position="178"/>
        <end position="181"/>
    </location>
</feature>
<feature type="strand" evidence="2">
    <location>
        <begin position="182"/>
        <end position="185"/>
    </location>
</feature>
<feature type="strand" evidence="2">
    <location>
        <begin position="188"/>
        <end position="191"/>
    </location>
</feature>
<feature type="strand" evidence="2">
    <location>
        <begin position="195"/>
        <end position="197"/>
    </location>
</feature>
<feature type="helix" evidence="2">
    <location>
        <begin position="201"/>
        <end position="203"/>
    </location>
</feature>
<feature type="helix" evidence="2">
    <location>
        <begin position="204"/>
        <end position="219"/>
    </location>
</feature>
<feature type="helix" evidence="2">
    <location>
        <begin position="223"/>
        <end position="230"/>
    </location>
</feature>
<feature type="helix" evidence="2">
    <location>
        <begin position="237"/>
        <end position="249"/>
    </location>
</feature>
<feature type="strand" evidence="2">
    <location>
        <begin position="254"/>
        <end position="258"/>
    </location>
</feature>
<feature type="turn" evidence="2">
    <location>
        <begin position="261"/>
        <end position="264"/>
    </location>
</feature>
<feature type="helix" evidence="2">
    <location>
        <begin position="267"/>
        <end position="277"/>
    </location>
</feature>
<feature type="helix" evidence="2">
    <location>
        <begin position="281"/>
        <end position="283"/>
    </location>
</feature>
<feature type="strand" evidence="2">
    <location>
        <begin position="287"/>
        <end position="291"/>
    </location>
</feature>
<feature type="turn" evidence="2">
    <location>
        <begin position="292"/>
        <end position="295"/>
    </location>
</feature>
<feature type="strand" evidence="2">
    <location>
        <begin position="296"/>
        <end position="300"/>
    </location>
</feature>
<feature type="strand" evidence="2">
    <location>
        <begin position="309"/>
        <end position="318"/>
    </location>
</feature>
<feature type="turn" evidence="2">
    <location>
        <begin position="319"/>
        <end position="321"/>
    </location>
</feature>
<feature type="strand" evidence="2">
    <location>
        <begin position="322"/>
        <end position="342"/>
    </location>
</feature>
<feature type="turn" evidence="2">
    <location>
        <begin position="343"/>
        <end position="346"/>
    </location>
</feature>
<feature type="strand" evidence="2">
    <location>
        <begin position="347"/>
        <end position="351"/>
    </location>
</feature>
<feature type="strand" evidence="2">
    <location>
        <begin position="354"/>
        <end position="357"/>
    </location>
</feature>
<feature type="strand" evidence="2">
    <location>
        <begin position="362"/>
        <end position="369"/>
    </location>
</feature>
<feature type="strand" evidence="2">
    <location>
        <begin position="373"/>
        <end position="378"/>
    </location>
</feature>
<feature type="strand" evidence="2">
    <location>
        <begin position="387"/>
        <end position="389"/>
    </location>
</feature>
<feature type="strand" evidence="2">
    <location>
        <begin position="395"/>
        <end position="397"/>
    </location>
</feature>
<protein>
    <recommendedName>
        <fullName evidence="1">Elongation factor G</fullName>
        <shortName evidence="1">EF-G</shortName>
    </recommendedName>
</protein>
<name>EFG_ENTFA</name>
<proteinExistence type="evidence at protein level"/>
<comment type="function">
    <text evidence="1">Catalyzes the GTP-dependent ribosomal translocation step during translation elongation. During this step, the ribosome changes from the pre-translocational (PRE) to the post-translocational (POST) state as the newly formed A-site-bound peptidyl-tRNA and P-site-bound deacylated tRNA move to the P and E sites, respectively. Catalyzes the coordinated movement of the two tRNA molecules, the mRNA and conformational changes in the ribosome.</text>
</comment>
<comment type="subcellular location">
    <subcellularLocation>
        <location evidence="1">Cytoplasm</location>
    </subcellularLocation>
</comment>
<comment type="similarity">
    <text evidence="1">Belongs to the TRAFAC class translation factor GTPase superfamily. Classic translation factor GTPase family. EF-G/EF-2 subfamily.</text>
</comment>
<reference key="1">
    <citation type="journal article" date="2003" name="Science">
        <title>Role of mobile DNA in the evolution of vancomycin-resistant Enterococcus faecalis.</title>
        <authorList>
            <person name="Paulsen I.T."/>
            <person name="Banerjei L."/>
            <person name="Myers G.S.A."/>
            <person name="Nelson K.E."/>
            <person name="Seshadri R."/>
            <person name="Read T.D."/>
            <person name="Fouts D.E."/>
            <person name="Eisen J.A."/>
            <person name="Gill S.R."/>
            <person name="Heidelberg J.F."/>
            <person name="Tettelin H."/>
            <person name="Dodson R.J."/>
            <person name="Umayam L.A."/>
            <person name="Brinkac L.M."/>
            <person name="Beanan M.J."/>
            <person name="Daugherty S.C."/>
            <person name="DeBoy R.T."/>
            <person name="Durkin S.A."/>
            <person name="Kolonay J.F."/>
            <person name="Madupu R."/>
            <person name="Nelson W.C."/>
            <person name="Vamathevan J.J."/>
            <person name="Tran B."/>
            <person name="Upton J."/>
            <person name="Hansen T."/>
            <person name="Shetty J."/>
            <person name="Khouri H.M."/>
            <person name="Utterback T.R."/>
            <person name="Radune D."/>
            <person name="Ketchum K.A."/>
            <person name="Dougherty B.A."/>
            <person name="Fraser C.M."/>
        </authorList>
    </citation>
    <scope>NUCLEOTIDE SEQUENCE [LARGE SCALE GENOMIC DNA]</scope>
    <source>
        <strain>ATCC 700802 / V583</strain>
    </source>
</reference>
<keyword id="KW-0002">3D-structure</keyword>
<keyword id="KW-0963">Cytoplasm</keyword>
<keyword id="KW-0251">Elongation factor</keyword>
<keyword id="KW-0342">GTP-binding</keyword>
<keyword id="KW-0547">Nucleotide-binding</keyword>
<keyword id="KW-0648">Protein biosynthesis</keyword>
<keyword id="KW-1185">Reference proteome</keyword>
<sequence length="693" mass="76679">MAREFSLEKTRNIGIMAHVDAGKTTTTERILYYTGKIHKIGETHEGASQMDWMEQEQERGITITSAATTAQWKGYRVNIIDTPGHVDFTIEVQRSLRVLDGAVTVLDSQSGVEPQTETVWRQATEYKVPRIVFCNKMDKIGADFFYSVESLHDRLQANAHPIQIPIGAEEDFTGIIDLIKMKAEIYTNDLGTDIQETDIPEDYLEKAQEWREKLVEAVAETDEDLMMKYLEGEEITEEELVAGIRQATINVEFFPVLAGSAFKNKGVQLMLDAVLDYLPSPLDIDAIKGIDTKTDEETTRPADDEAPFASLAFKVMTDPFVGRLTFFRVYSGVLESGSYVLNASKGKKERIGRILQMHANTRQEIDKVYSGDIAAAVGLKDTTTGDTLCALDAPVILESIEFPDPVIQVAVEPKSKADQDKMGVALQKLAEEDPSFRVETNVETGETVISGMGELHLDVLVDRMKREFKVEANVGAPQVSYRETFRAATKAEGKFVRQSGGKGQYGHVWVEFTPNEEGKGFEFENAIVGGVVPREYIPAVEKGLEDSMNNGVLAGYPLVDIKAKLYDGSYHDVDSNETAFRVAASMALKAAAKNANPVILEPMMKVTITVPEDYLGDIMGHVTSRRGRVEGMEAHGNSQIVNAMVPLAEMFGYATTLRSATQGRGTFMMVFDHYEDVPKSVQEEIIKKNGGNA</sequence>
<gene>
    <name evidence="1" type="primary">fusA</name>
    <name type="ordered locus">EF_0200</name>
</gene>